<gene>
    <name type="ORF">84</name>
</gene>
<keyword id="KW-0175">Coiled coil</keyword>
<keyword id="KW-1043">Host membrane</keyword>
<keyword id="KW-0472">Membrane</keyword>
<keyword id="KW-1185">Reference proteome</keyword>
<keyword id="KW-0812">Transmembrane</keyword>
<keyword id="KW-1133">Transmembrane helix</keyword>
<dbReference type="EMBL" id="AJ414696">
    <property type="protein sequence ID" value="CAC93978.1"/>
    <property type="molecule type" value="Genomic_DNA"/>
</dbReference>
<dbReference type="EMBL" id="AJ748296">
    <property type="protein sequence ID" value="CAG38842.1"/>
    <property type="molecule type" value="Genomic_DNA"/>
</dbReference>
<dbReference type="RefSeq" id="NP_666611.1">
    <property type="nucleotide sequence ID" value="NC_004087.1"/>
</dbReference>
<dbReference type="SMR" id="Q8QL32"/>
<dbReference type="KEGG" id="vg:951376"/>
<dbReference type="OrthoDB" id="25873at10239"/>
<dbReference type="Proteomes" id="UP000002270">
    <property type="component" value="Genome"/>
</dbReference>
<dbReference type="Proteomes" id="UP000223181">
    <property type="component" value="Segment"/>
</dbReference>
<dbReference type="GO" id="GO:0033644">
    <property type="term" value="C:host cell membrane"/>
    <property type="evidence" value="ECO:0007669"/>
    <property type="project" value="UniProtKB-SubCell"/>
</dbReference>
<dbReference type="GO" id="GO:0016020">
    <property type="term" value="C:membrane"/>
    <property type="evidence" value="ECO:0007669"/>
    <property type="project" value="UniProtKB-KW"/>
</dbReference>
<accession>Q8QL32</accession>
<accession>Q5TJ96</accession>
<evidence type="ECO:0000255" key="1"/>
<evidence type="ECO:0000305" key="2"/>
<comment type="subcellular location">
    <subcellularLocation>
        <location evidence="2">Host membrane</location>
        <topology evidence="2">Single-pass membrane protein</topology>
    </subcellularLocation>
</comment>
<name>Y84_SIRV1</name>
<sequence length="84" mass="9870">MNYLRRKMKMSETTLVLTIISTTTTTLFAIIQLYLKIKQALKDAVKEIVNSELSNLKTEIEELKIKQDELSRQVEEIKRKLDQK</sequence>
<organism>
    <name type="scientific">Sulfolobus islandicus rod-shaped virus 1</name>
    <name type="common">SIRV-1</name>
    <name type="synonym">Sulfolobus virus SIRV-1</name>
    <dbReference type="NCBI Taxonomy" id="157898"/>
    <lineage>
        <taxon>Viruses</taxon>
        <taxon>Adnaviria</taxon>
        <taxon>Zilligvirae</taxon>
        <taxon>Taleaviricota</taxon>
        <taxon>Tokiviricetes</taxon>
        <taxon>Ligamenvirales</taxon>
        <taxon>Rudiviridae</taxon>
        <taxon>Icerudivirus</taxon>
        <taxon>Icerudivirus SIRV1</taxon>
    </lineage>
</organism>
<protein>
    <recommendedName>
        <fullName>Uncharacterized protein 84</fullName>
    </recommendedName>
</protein>
<reference key="1">
    <citation type="journal article" date="2001" name="Virology">
        <title>Sequences and replication of genomes of the archaeal rudiviruses SIRV1 and SIRV2: relationships to the archaeal lipothrixvirus SIFV and some eukaryal viruses.</title>
        <authorList>
            <person name="Peng X."/>
            <person name="Blum H."/>
            <person name="She Q."/>
            <person name="Mallok S."/>
            <person name="Bruegger K."/>
            <person name="Garrett R.A."/>
            <person name="Zillig W."/>
            <person name="Prangishvili D."/>
        </authorList>
    </citation>
    <scope>NUCLEOTIDE SEQUENCE [LARGE SCALE GENOMIC DNA]</scope>
    <source>
        <strain>Isolate variant VIII</strain>
    </source>
</reference>
<reference key="2">
    <citation type="journal article" date="2004" name="Mol. Microbiol.">
        <title>Multiple variants of the archaeal DNA rudivirus SIRV1 in a single host and a novel mechanism of genomic variation.</title>
        <authorList>
            <person name="Peng X."/>
            <person name="Kessler A."/>
            <person name="Phan H."/>
            <person name="Garrett R.A."/>
            <person name="Prangishvili D."/>
        </authorList>
    </citation>
    <scope>NUCLEOTIDE SEQUENCE [LARGE SCALE GENOMIC DNA]</scope>
    <source>
        <strain>Isolate variant XX</strain>
    </source>
</reference>
<organismHost>
    <name type="scientific">Saccharolobus islandicus</name>
    <name type="common">Sulfolobus islandicus</name>
    <dbReference type="NCBI Taxonomy" id="43080"/>
</organismHost>
<feature type="chain" id="PRO_0000342312" description="Uncharacterized protein 84">
    <location>
        <begin position="1"/>
        <end position="84"/>
    </location>
</feature>
<feature type="transmembrane region" description="Helical" evidence="1">
    <location>
        <begin position="13"/>
        <end position="35"/>
    </location>
</feature>
<feature type="coiled-coil region" evidence="1">
    <location>
        <begin position="41"/>
        <end position="84"/>
    </location>
</feature>
<proteinExistence type="predicted"/>